<accession>B7UIL1</accession>
<name>DAPD_ECO27</name>
<gene>
    <name evidence="1" type="primary">dapD</name>
    <name type="ordered locus">E2348C_0171</name>
</gene>
<organism>
    <name type="scientific">Escherichia coli O127:H6 (strain E2348/69 / EPEC)</name>
    <dbReference type="NCBI Taxonomy" id="574521"/>
    <lineage>
        <taxon>Bacteria</taxon>
        <taxon>Pseudomonadati</taxon>
        <taxon>Pseudomonadota</taxon>
        <taxon>Gammaproteobacteria</taxon>
        <taxon>Enterobacterales</taxon>
        <taxon>Enterobacteriaceae</taxon>
        <taxon>Escherichia</taxon>
    </lineage>
</organism>
<reference key="1">
    <citation type="journal article" date="2009" name="J. Bacteriol.">
        <title>Complete genome sequence and comparative genome analysis of enteropathogenic Escherichia coli O127:H6 strain E2348/69.</title>
        <authorList>
            <person name="Iguchi A."/>
            <person name="Thomson N.R."/>
            <person name="Ogura Y."/>
            <person name="Saunders D."/>
            <person name="Ooka T."/>
            <person name="Henderson I.R."/>
            <person name="Harris D."/>
            <person name="Asadulghani M."/>
            <person name="Kurokawa K."/>
            <person name="Dean P."/>
            <person name="Kenny B."/>
            <person name="Quail M.A."/>
            <person name="Thurston S."/>
            <person name="Dougan G."/>
            <person name="Hayashi T."/>
            <person name="Parkhill J."/>
            <person name="Frankel G."/>
        </authorList>
    </citation>
    <scope>NUCLEOTIDE SEQUENCE [LARGE SCALE GENOMIC DNA]</scope>
    <source>
        <strain>E2348/69 / EPEC</strain>
    </source>
</reference>
<keyword id="KW-0012">Acyltransferase</keyword>
<keyword id="KW-0028">Amino-acid biosynthesis</keyword>
<keyword id="KW-0963">Cytoplasm</keyword>
<keyword id="KW-0220">Diaminopimelate biosynthesis</keyword>
<keyword id="KW-0457">Lysine biosynthesis</keyword>
<keyword id="KW-1185">Reference proteome</keyword>
<keyword id="KW-0677">Repeat</keyword>
<keyword id="KW-0808">Transferase</keyword>
<proteinExistence type="inferred from homology"/>
<feature type="chain" id="PRO_1000148584" description="2,3,4,5-tetrahydropyridine-2,6-dicarboxylate N-succinyltransferase">
    <location>
        <begin position="1"/>
        <end position="274"/>
    </location>
</feature>
<feature type="binding site" evidence="1">
    <location>
        <position position="104"/>
    </location>
    <ligand>
        <name>substrate</name>
    </ligand>
</feature>
<feature type="binding site" evidence="1">
    <location>
        <position position="141"/>
    </location>
    <ligand>
        <name>substrate</name>
    </ligand>
</feature>
<comment type="catalytic activity">
    <reaction evidence="1">
        <text>(S)-2,3,4,5-tetrahydrodipicolinate + succinyl-CoA + H2O = (S)-2-succinylamino-6-oxoheptanedioate + CoA</text>
        <dbReference type="Rhea" id="RHEA:17325"/>
        <dbReference type="ChEBI" id="CHEBI:15377"/>
        <dbReference type="ChEBI" id="CHEBI:15685"/>
        <dbReference type="ChEBI" id="CHEBI:16845"/>
        <dbReference type="ChEBI" id="CHEBI:57287"/>
        <dbReference type="ChEBI" id="CHEBI:57292"/>
        <dbReference type="EC" id="2.3.1.117"/>
    </reaction>
</comment>
<comment type="pathway">
    <text evidence="1">Amino-acid biosynthesis; L-lysine biosynthesis via DAP pathway; LL-2,6-diaminopimelate from (S)-tetrahydrodipicolinate (succinylase route): step 1/3.</text>
</comment>
<comment type="subunit">
    <text evidence="1">Homotrimer.</text>
</comment>
<comment type="subcellular location">
    <subcellularLocation>
        <location evidence="1">Cytoplasm</location>
    </subcellularLocation>
</comment>
<comment type="similarity">
    <text evidence="1">Belongs to the transferase hexapeptide repeat family.</text>
</comment>
<evidence type="ECO:0000255" key="1">
    <source>
        <dbReference type="HAMAP-Rule" id="MF_00811"/>
    </source>
</evidence>
<sequence>MQQLQNIIETAFERRAEITPANADTVTREAVNQVIALLDSGALRVAEKIDGQWVTHQWLKKAVLLSFRINDNQVIEGAESRYFDKVPMKFANYDEARFQKEGFRVVPPAAVRQGAFIARNTVLMPSYVNIGAYVDEGTMVDTWATVGSCAQIGKNVHLSGGVGIGGVLEPLQANPTIIEDNCFIGARSEVVEGVIVEEGSVISMGVYIGQSTRIYDRETGEIHYGRVPAGSVVVSGNLPSKDGKYSLYCAVIVKKVDAKTRGKVGINELLRTID</sequence>
<protein>
    <recommendedName>
        <fullName evidence="1">2,3,4,5-tetrahydropyridine-2,6-dicarboxylate N-succinyltransferase</fullName>
        <ecNumber evidence="1">2.3.1.117</ecNumber>
    </recommendedName>
    <alternativeName>
        <fullName evidence="1">Tetrahydrodipicolinate N-succinyltransferase</fullName>
        <shortName evidence="1">THDP succinyltransferase</shortName>
        <shortName evidence="1">THP succinyltransferase</shortName>
        <shortName evidence="1">Tetrahydropicolinate succinylase</shortName>
    </alternativeName>
</protein>
<dbReference type="EC" id="2.3.1.117" evidence="1"/>
<dbReference type="EMBL" id="FM180568">
    <property type="protein sequence ID" value="CAS07719.1"/>
    <property type="molecule type" value="Genomic_DNA"/>
</dbReference>
<dbReference type="RefSeq" id="WP_001186656.1">
    <property type="nucleotide sequence ID" value="NC_011601.1"/>
</dbReference>
<dbReference type="SMR" id="B7UIL1"/>
<dbReference type="KEGG" id="ecg:E2348C_0171"/>
<dbReference type="HOGENOM" id="CLU_050859_0_1_6"/>
<dbReference type="UniPathway" id="UPA00034">
    <property type="reaction ID" value="UER00019"/>
</dbReference>
<dbReference type="Proteomes" id="UP000008205">
    <property type="component" value="Chromosome"/>
</dbReference>
<dbReference type="GO" id="GO:0005737">
    <property type="term" value="C:cytoplasm"/>
    <property type="evidence" value="ECO:0007669"/>
    <property type="project" value="UniProtKB-SubCell"/>
</dbReference>
<dbReference type="GO" id="GO:0008666">
    <property type="term" value="F:2,3,4,5-tetrahydropyridine-2,6-dicarboxylate N-succinyltransferase activity"/>
    <property type="evidence" value="ECO:0007669"/>
    <property type="project" value="UniProtKB-UniRule"/>
</dbReference>
<dbReference type="GO" id="GO:0016779">
    <property type="term" value="F:nucleotidyltransferase activity"/>
    <property type="evidence" value="ECO:0007669"/>
    <property type="project" value="TreeGrafter"/>
</dbReference>
<dbReference type="GO" id="GO:0019877">
    <property type="term" value="P:diaminopimelate biosynthetic process"/>
    <property type="evidence" value="ECO:0007669"/>
    <property type="project" value="UniProtKB-UniRule"/>
</dbReference>
<dbReference type="GO" id="GO:0009089">
    <property type="term" value="P:lysine biosynthetic process via diaminopimelate"/>
    <property type="evidence" value="ECO:0007669"/>
    <property type="project" value="UniProtKB-UniRule"/>
</dbReference>
<dbReference type="CDD" id="cd03350">
    <property type="entry name" value="LbH_THP_succinylT"/>
    <property type="match status" value="1"/>
</dbReference>
<dbReference type="FunFam" id="1.10.166.10:FF:000001">
    <property type="entry name" value="2,3,4,5-tetrahydropyridine-2,6-dicarboxylate N-succinyltransferase"/>
    <property type="match status" value="1"/>
</dbReference>
<dbReference type="FunFam" id="2.160.10.10:FF:000004">
    <property type="entry name" value="2,3,4,5-tetrahydropyridine-2,6-dicarboxylate N-succinyltransferase"/>
    <property type="match status" value="1"/>
</dbReference>
<dbReference type="Gene3D" id="2.160.10.10">
    <property type="entry name" value="Hexapeptide repeat proteins"/>
    <property type="match status" value="1"/>
</dbReference>
<dbReference type="Gene3D" id="1.10.166.10">
    <property type="entry name" value="Tetrahydrodipicolinate-N-succinyltransferase, N-terminal domain"/>
    <property type="match status" value="1"/>
</dbReference>
<dbReference type="HAMAP" id="MF_00811">
    <property type="entry name" value="DapD"/>
    <property type="match status" value="1"/>
</dbReference>
<dbReference type="InterPro" id="IPR005664">
    <property type="entry name" value="DapD_Trfase_Hexpep_rpt_fam"/>
</dbReference>
<dbReference type="InterPro" id="IPR001451">
    <property type="entry name" value="Hexapep"/>
</dbReference>
<dbReference type="InterPro" id="IPR018357">
    <property type="entry name" value="Hexapep_transf_CS"/>
</dbReference>
<dbReference type="InterPro" id="IPR023180">
    <property type="entry name" value="THP_succinylTrfase_dom1"/>
</dbReference>
<dbReference type="InterPro" id="IPR037133">
    <property type="entry name" value="THP_succinylTrfase_N_sf"/>
</dbReference>
<dbReference type="InterPro" id="IPR011004">
    <property type="entry name" value="Trimer_LpxA-like_sf"/>
</dbReference>
<dbReference type="NCBIfam" id="TIGR00965">
    <property type="entry name" value="dapD"/>
    <property type="match status" value="1"/>
</dbReference>
<dbReference type="NCBIfam" id="NF008808">
    <property type="entry name" value="PRK11830.1"/>
    <property type="match status" value="1"/>
</dbReference>
<dbReference type="PANTHER" id="PTHR19136:SF52">
    <property type="entry name" value="2,3,4,5-TETRAHYDROPYRIDINE-2,6-DICARBOXYLATE N-SUCCINYLTRANSFERASE"/>
    <property type="match status" value="1"/>
</dbReference>
<dbReference type="PANTHER" id="PTHR19136">
    <property type="entry name" value="MOLYBDENUM COFACTOR GUANYLYLTRANSFERASE"/>
    <property type="match status" value="1"/>
</dbReference>
<dbReference type="Pfam" id="PF14602">
    <property type="entry name" value="Hexapep_2"/>
    <property type="match status" value="1"/>
</dbReference>
<dbReference type="Pfam" id="PF14805">
    <property type="entry name" value="THDPS_N_2"/>
    <property type="match status" value="1"/>
</dbReference>
<dbReference type="SUPFAM" id="SSF51161">
    <property type="entry name" value="Trimeric LpxA-like enzymes"/>
    <property type="match status" value="1"/>
</dbReference>
<dbReference type="PROSITE" id="PS00101">
    <property type="entry name" value="HEXAPEP_TRANSFERASES"/>
    <property type="match status" value="1"/>
</dbReference>